<dbReference type="Proteomes" id="UP001155700">
    <property type="component" value="Unplaced"/>
</dbReference>
<dbReference type="GO" id="GO:1990904">
    <property type="term" value="C:ribonucleoprotein complex"/>
    <property type="evidence" value="ECO:0007669"/>
    <property type="project" value="UniProtKB-KW"/>
</dbReference>
<dbReference type="GO" id="GO:0005840">
    <property type="term" value="C:ribosome"/>
    <property type="evidence" value="ECO:0007669"/>
    <property type="project" value="UniProtKB-KW"/>
</dbReference>
<comment type="similarity">
    <text evidence="1">Belongs to the eukaryotic ribosomal protein eL21 family.</text>
</comment>
<proteinExistence type="evidence at protein level"/>
<name>RL21_SPIOL</name>
<sequence>PAGHGARARTRDLFAR</sequence>
<evidence type="ECO:0000255" key="1"/>
<evidence type="ECO:0000269" key="2">
    <source ref="1"/>
</evidence>
<evidence type="ECO:0000303" key="3">
    <source ref="1"/>
</evidence>
<evidence type="ECO:0000305" key="4"/>
<accession>P82453</accession>
<reference evidence="4" key="1">
    <citation type="submission" date="2000-04" db="UniProtKB">
        <title>N-terminal sequence of spinach cytosolic 60S ribosomal protein L21.</title>
        <authorList>
            <person name="Yamaguchi K."/>
            <person name="Subramanian A.R."/>
        </authorList>
    </citation>
    <scope>PROTEIN SEQUENCE</scope>
    <source>
        <strain evidence="2">cv. Alwaro</strain>
        <tissue evidence="2">Leaf</tissue>
    </source>
</reference>
<gene>
    <name type="primary">RPL21</name>
</gene>
<keyword id="KW-0903">Direct protein sequencing</keyword>
<keyword id="KW-1185">Reference proteome</keyword>
<keyword id="KW-0687">Ribonucleoprotein</keyword>
<keyword id="KW-0689">Ribosomal protein</keyword>
<protein>
    <recommendedName>
        <fullName evidence="4">Large ribosomal subunit protein eL21</fullName>
    </recommendedName>
    <alternativeName>
        <fullName>60S ribosomal protein L21</fullName>
    </alternativeName>
</protein>
<feature type="chain" id="PRO_0000259410" description="Large ribosomal subunit protein eL21">
    <location>
        <begin position="1"/>
        <end position="16" status="greater than"/>
    </location>
</feature>
<feature type="non-terminal residue" evidence="3">
    <location>
        <position position="16"/>
    </location>
</feature>
<organism>
    <name type="scientific">Spinacia oleracea</name>
    <name type="common">Spinach</name>
    <dbReference type="NCBI Taxonomy" id="3562"/>
    <lineage>
        <taxon>Eukaryota</taxon>
        <taxon>Viridiplantae</taxon>
        <taxon>Streptophyta</taxon>
        <taxon>Embryophyta</taxon>
        <taxon>Tracheophyta</taxon>
        <taxon>Spermatophyta</taxon>
        <taxon>Magnoliopsida</taxon>
        <taxon>eudicotyledons</taxon>
        <taxon>Gunneridae</taxon>
        <taxon>Pentapetalae</taxon>
        <taxon>Caryophyllales</taxon>
        <taxon>Chenopodiaceae</taxon>
        <taxon>Chenopodioideae</taxon>
        <taxon>Anserineae</taxon>
        <taxon>Spinacia</taxon>
    </lineage>
</organism>